<comment type="similarity">
    <text evidence="2">Belongs to the NifZ family.</text>
</comment>
<feature type="chain" id="PRO_0000096841" description="Putative NifZ protein">
    <location>
        <begin position="1"/>
        <end position="108"/>
    </location>
</feature>
<feature type="region of interest" description="Disordered" evidence="1">
    <location>
        <begin position="86"/>
        <end position="108"/>
    </location>
</feature>
<accession>Q53203</accession>
<evidence type="ECO:0000256" key="1">
    <source>
        <dbReference type="SAM" id="MobiDB-lite"/>
    </source>
</evidence>
<evidence type="ECO:0000305" key="2"/>
<geneLocation type="plasmid">
    <name>sym pNGR234a</name>
</geneLocation>
<protein>
    <recommendedName>
        <fullName>Putative NifZ protein</fullName>
    </recommendedName>
</protein>
<dbReference type="EMBL" id="Z68203">
    <property type="protein sequence ID" value="CAA92410.1"/>
    <property type="molecule type" value="Genomic_DNA"/>
</dbReference>
<dbReference type="EMBL" id="U00090">
    <property type="protein sequence ID" value="AAB91883.1"/>
    <property type="molecule type" value="Genomic_DNA"/>
</dbReference>
<dbReference type="RefSeq" id="NP_444096.1">
    <property type="nucleotide sequence ID" value="NC_000914.2"/>
</dbReference>
<dbReference type="RefSeq" id="WP_010875167.1">
    <property type="nucleotide sequence ID" value="NC_000914.2"/>
</dbReference>
<dbReference type="KEGG" id="rhi:NGR_a01290"/>
<dbReference type="PATRIC" id="fig|394.7.peg.113"/>
<dbReference type="eggNOG" id="COG5554">
    <property type="taxonomic scope" value="Bacteria"/>
</dbReference>
<dbReference type="HOGENOM" id="CLU_142102_1_0_5"/>
<dbReference type="OrthoDB" id="9801083at2"/>
<dbReference type="Proteomes" id="UP000001054">
    <property type="component" value="Plasmid pNGR234a"/>
</dbReference>
<dbReference type="GO" id="GO:0009399">
    <property type="term" value="P:nitrogen fixation"/>
    <property type="evidence" value="ECO:0007669"/>
    <property type="project" value="UniProtKB-KW"/>
</dbReference>
<dbReference type="InterPro" id="IPR007415">
    <property type="entry name" value="Nitrogenase_MoFe_mat_NifZ"/>
</dbReference>
<dbReference type="Pfam" id="PF04319">
    <property type="entry name" value="NifZ"/>
    <property type="match status" value="1"/>
</dbReference>
<sequence length="108" mass="12154">MSIGREEEVEIHNPPRFMPGERVCATRHIKNDGTYPGKEIGERLVRKGDAGFVRDVGTFLQQFYIYAVEWIDRGIVVGMRTRELRSLGGTSTPKTTECARGVNEGKAR</sequence>
<name>NIFZ_SINFN</name>
<reference key="1">
    <citation type="journal article" date="1996" name="Genome Res.">
        <title>Sequencing the 500-kb GC-rich symbiotic replicon of Rhizobium sp. NGR234 using dye terminators and a thermostable 'sequenase': a beginning.</title>
        <authorList>
            <person name="Freiberg C."/>
            <person name="Perret X."/>
            <person name="Broughton W.J."/>
            <person name="Rosenthal A."/>
        </authorList>
    </citation>
    <scope>NUCLEOTIDE SEQUENCE [GENOMIC DNA]</scope>
</reference>
<reference key="2">
    <citation type="journal article" date="1997" name="Nature">
        <title>Molecular basis of symbiosis between Rhizobium and legumes.</title>
        <authorList>
            <person name="Freiberg C.A."/>
            <person name="Fellay R."/>
            <person name="Bairoch A."/>
            <person name="Broughton W.J."/>
            <person name="Rosenthal A."/>
            <person name="Perret X."/>
        </authorList>
    </citation>
    <scope>NUCLEOTIDE SEQUENCE [LARGE SCALE GENOMIC DNA]</scope>
    <source>
        <strain>NBRC 101917 / NGR234</strain>
    </source>
</reference>
<reference key="3">
    <citation type="journal article" date="2009" name="Appl. Environ. Microbiol.">
        <title>Rhizobium sp. strain NGR234 possesses a remarkable number of secretion systems.</title>
        <authorList>
            <person name="Schmeisser C."/>
            <person name="Liesegang H."/>
            <person name="Krysciak D."/>
            <person name="Bakkou N."/>
            <person name="Le Quere A."/>
            <person name="Wollherr A."/>
            <person name="Heinemeyer I."/>
            <person name="Morgenstern B."/>
            <person name="Pommerening-Roeser A."/>
            <person name="Flores M."/>
            <person name="Palacios R."/>
            <person name="Brenner S."/>
            <person name="Gottschalk G."/>
            <person name="Schmitz R.A."/>
            <person name="Broughton W.J."/>
            <person name="Perret X."/>
            <person name="Strittmatter A.W."/>
            <person name="Streit W.R."/>
        </authorList>
    </citation>
    <scope>NUCLEOTIDE SEQUENCE [LARGE SCALE GENOMIC DNA]</scope>
    <source>
        <strain>NBRC 101917 / NGR234</strain>
    </source>
</reference>
<organism>
    <name type="scientific">Sinorhizobium fredii (strain NBRC 101917 / NGR234)</name>
    <dbReference type="NCBI Taxonomy" id="394"/>
    <lineage>
        <taxon>Bacteria</taxon>
        <taxon>Pseudomonadati</taxon>
        <taxon>Pseudomonadota</taxon>
        <taxon>Alphaproteobacteria</taxon>
        <taxon>Hyphomicrobiales</taxon>
        <taxon>Rhizobiaceae</taxon>
        <taxon>Sinorhizobium/Ensifer group</taxon>
        <taxon>Sinorhizobium</taxon>
    </lineage>
</organism>
<gene>
    <name type="primary">nifZ</name>
    <name type="ordered locus">NGR_a01290</name>
    <name type="ORF">y4uK</name>
</gene>
<keyword id="KW-0535">Nitrogen fixation</keyword>
<keyword id="KW-0614">Plasmid</keyword>
<keyword id="KW-1185">Reference proteome</keyword>
<proteinExistence type="inferred from homology"/>